<sequence length="498" mass="53926">MTAPAAANAALDQTVVSLPVQETARVVRDTRPLRLITCGSVDDGKSTLIGRLLWDTKAVKEDQAASLQRDSSGKQNDLGLPDFALLLDGLQAEREQGITIDVAYRYFATDKRSFIVADTPGHEQYTRNMATGASTADLAVLLVDARVGLLEQTRRHATIATLMGIRQFVLAVNKIDLTNYDRARFDQISHEFRELALSLGVRQVTAIPVSALKGENVVYDGRASMPWYDGPTLIEILELATTRSAQTVGFRLPVQRVSRPGESFRGYQGTVAGGSVKPGDSVVILPSGMVANVSKIVTFDLVRNAAVAGDAITLVLDRQVDVSRGDVIASIDSQPTTGLAFDAQLVALQPEGIQPGKRYWLKSGSRRQRVQVQPVSQLELKSGKWNHADELPMNAIGKVHLAFDEQAIFDTYEQNRTTGAFILIDPDTNNTVAGGMITAKRAALGGIHAEESRVILSLPADLADQLMATELFASRREDVEVRRVTAGKAVNIIDAIDG</sequence>
<name>CYSN_RHIME</name>
<protein>
    <recommendedName>
        <fullName evidence="2">Sulfate adenylyltransferase subunit 1</fullName>
        <ecNumber evidence="2">2.7.7.4</ecNumber>
    </recommendedName>
    <alternativeName>
        <fullName evidence="2">ATP-sulfurylase large subunit</fullName>
    </alternativeName>
    <alternativeName>
        <fullName evidence="2">Sulfate adenylate transferase</fullName>
        <shortName evidence="2">SAT</shortName>
    </alternativeName>
</protein>
<gene>
    <name evidence="2" type="primary">cysN</name>
    <name type="ordered locus">R00942</name>
    <name type="ORF">SMc00090</name>
</gene>
<organism>
    <name type="scientific">Rhizobium meliloti (strain 1021)</name>
    <name type="common">Ensifer meliloti</name>
    <name type="synonym">Sinorhizobium meliloti</name>
    <dbReference type="NCBI Taxonomy" id="266834"/>
    <lineage>
        <taxon>Bacteria</taxon>
        <taxon>Pseudomonadati</taxon>
        <taxon>Pseudomonadota</taxon>
        <taxon>Alphaproteobacteria</taxon>
        <taxon>Hyphomicrobiales</taxon>
        <taxon>Rhizobiaceae</taxon>
        <taxon>Sinorhizobium/Ensifer group</taxon>
        <taxon>Sinorhizobium</taxon>
    </lineage>
</organism>
<comment type="function">
    <text evidence="2">With CysD forms the ATP sulfurylase (ATPS) that catalyzes the adenylation of sulfate producing adenosine 5'-phosphosulfate (APS) and diphosphate, the first enzymatic step in sulfur assimilation pathway. APS synthesis involves the formation of a high-energy phosphoric-sulfuric acid anhydride bond driven by GTP hydrolysis by CysN coupled to ATP hydrolysis by CysD.</text>
</comment>
<comment type="catalytic activity">
    <reaction evidence="2">
        <text>sulfate + ATP + H(+) = adenosine 5'-phosphosulfate + diphosphate</text>
        <dbReference type="Rhea" id="RHEA:18133"/>
        <dbReference type="ChEBI" id="CHEBI:15378"/>
        <dbReference type="ChEBI" id="CHEBI:16189"/>
        <dbReference type="ChEBI" id="CHEBI:30616"/>
        <dbReference type="ChEBI" id="CHEBI:33019"/>
        <dbReference type="ChEBI" id="CHEBI:58243"/>
        <dbReference type="EC" id="2.7.7.4"/>
    </reaction>
</comment>
<comment type="pathway">
    <text evidence="2">Sulfur metabolism; hydrogen sulfide biosynthesis; sulfite from sulfate: step 1/3.</text>
</comment>
<comment type="subunit">
    <text evidence="2">Heterodimer composed of CysD, the smaller subunit, and CysN.</text>
</comment>
<comment type="similarity">
    <text evidence="2 3">Belongs to the TRAFAC class translation factor GTPase superfamily. Classic translation factor GTPase family. CysN/NodQ subfamily.</text>
</comment>
<feature type="chain" id="PRO_0000091526" description="Sulfate adenylyltransferase subunit 1">
    <location>
        <begin position="1"/>
        <end position="498"/>
    </location>
</feature>
<feature type="domain" description="tr-type G">
    <location>
        <begin position="30"/>
        <end position="246"/>
    </location>
</feature>
<feature type="region of interest" description="G1" evidence="1">
    <location>
        <begin position="39"/>
        <end position="46"/>
    </location>
</feature>
<feature type="region of interest" description="G2" evidence="1">
    <location>
        <begin position="97"/>
        <end position="101"/>
    </location>
</feature>
<feature type="region of interest" description="G3" evidence="1">
    <location>
        <begin position="118"/>
        <end position="121"/>
    </location>
</feature>
<feature type="region of interest" description="G4" evidence="1">
    <location>
        <begin position="173"/>
        <end position="176"/>
    </location>
</feature>
<feature type="region of interest" description="G5" evidence="1">
    <location>
        <begin position="210"/>
        <end position="212"/>
    </location>
</feature>
<feature type="binding site" evidence="2">
    <location>
        <begin position="39"/>
        <end position="46"/>
    </location>
    <ligand>
        <name>GTP</name>
        <dbReference type="ChEBI" id="CHEBI:37565"/>
    </ligand>
</feature>
<feature type="binding site" evidence="2">
    <location>
        <begin position="118"/>
        <end position="122"/>
    </location>
    <ligand>
        <name>GTP</name>
        <dbReference type="ChEBI" id="CHEBI:37565"/>
    </ligand>
</feature>
<feature type="binding site" evidence="2">
    <location>
        <begin position="173"/>
        <end position="176"/>
    </location>
    <ligand>
        <name>GTP</name>
        <dbReference type="ChEBI" id="CHEBI:37565"/>
    </ligand>
</feature>
<dbReference type="EC" id="2.7.7.4" evidence="2"/>
<dbReference type="EMBL" id="AF158023">
    <property type="protein sequence ID" value="AAD55761.1"/>
    <property type="molecule type" value="Genomic_DNA"/>
</dbReference>
<dbReference type="EMBL" id="AL591688">
    <property type="protein sequence ID" value="CAC45514.1"/>
    <property type="molecule type" value="Genomic_DNA"/>
</dbReference>
<dbReference type="RefSeq" id="NP_385048.1">
    <property type="nucleotide sequence ID" value="NC_003047.1"/>
</dbReference>
<dbReference type="RefSeq" id="WP_010968937.1">
    <property type="nucleotide sequence ID" value="NC_003047.1"/>
</dbReference>
<dbReference type="SMR" id="P56893"/>
<dbReference type="EnsemblBacteria" id="CAC45514">
    <property type="protein sequence ID" value="CAC45514"/>
    <property type="gene ID" value="SMc00090"/>
</dbReference>
<dbReference type="KEGG" id="sme:SMc00090"/>
<dbReference type="PATRIC" id="fig|266834.11.peg.2340"/>
<dbReference type="eggNOG" id="COG2895">
    <property type="taxonomic scope" value="Bacteria"/>
</dbReference>
<dbReference type="HOGENOM" id="CLU_007265_5_2_5"/>
<dbReference type="OrthoDB" id="9804504at2"/>
<dbReference type="BioCyc" id="MetaCyc:MONOMER-16111"/>
<dbReference type="UniPathway" id="UPA00140">
    <property type="reaction ID" value="UER00204"/>
</dbReference>
<dbReference type="Proteomes" id="UP000001976">
    <property type="component" value="Chromosome"/>
</dbReference>
<dbReference type="GO" id="GO:0005524">
    <property type="term" value="F:ATP binding"/>
    <property type="evidence" value="ECO:0007669"/>
    <property type="project" value="UniProtKB-KW"/>
</dbReference>
<dbReference type="GO" id="GO:0005525">
    <property type="term" value="F:GTP binding"/>
    <property type="evidence" value="ECO:0007669"/>
    <property type="project" value="UniProtKB-UniRule"/>
</dbReference>
<dbReference type="GO" id="GO:0003924">
    <property type="term" value="F:GTPase activity"/>
    <property type="evidence" value="ECO:0007669"/>
    <property type="project" value="InterPro"/>
</dbReference>
<dbReference type="GO" id="GO:0004781">
    <property type="term" value="F:sulfate adenylyltransferase (ATP) activity"/>
    <property type="evidence" value="ECO:0007669"/>
    <property type="project" value="UniProtKB-UniRule"/>
</dbReference>
<dbReference type="GO" id="GO:0070814">
    <property type="term" value="P:hydrogen sulfide biosynthetic process"/>
    <property type="evidence" value="ECO:0007669"/>
    <property type="project" value="UniProtKB-UniRule"/>
</dbReference>
<dbReference type="GO" id="GO:0000103">
    <property type="term" value="P:sulfate assimilation"/>
    <property type="evidence" value="ECO:0007669"/>
    <property type="project" value="UniProtKB-UniRule"/>
</dbReference>
<dbReference type="CDD" id="cd04166">
    <property type="entry name" value="CysN_ATPS"/>
    <property type="match status" value="1"/>
</dbReference>
<dbReference type="CDD" id="cd03695">
    <property type="entry name" value="CysN_NodQ_II"/>
    <property type="match status" value="1"/>
</dbReference>
<dbReference type="CDD" id="cd04095">
    <property type="entry name" value="CysN_NoDQ_III"/>
    <property type="match status" value="1"/>
</dbReference>
<dbReference type="FunFam" id="3.40.50.300:FF:000119">
    <property type="entry name" value="Sulfate adenylyltransferase subunit 1"/>
    <property type="match status" value="1"/>
</dbReference>
<dbReference type="Gene3D" id="3.40.50.300">
    <property type="entry name" value="P-loop containing nucleotide triphosphate hydrolases"/>
    <property type="match status" value="1"/>
</dbReference>
<dbReference type="Gene3D" id="2.40.30.10">
    <property type="entry name" value="Translation factors"/>
    <property type="match status" value="2"/>
</dbReference>
<dbReference type="HAMAP" id="MF_00062">
    <property type="entry name" value="Sulf_adenylyltr_sub1"/>
    <property type="match status" value="1"/>
</dbReference>
<dbReference type="InterPro" id="IPR041757">
    <property type="entry name" value="CysN_GTP-bd"/>
</dbReference>
<dbReference type="InterPro" id="IPR044138">
    <property type="entry name" value="CysN_II"/>
</dbReference>
<dbReference type="InterPro" id="IPR044139">
    <property type="entry name" value="CysN_NoDQ_III"/>
</dbReference>
<dbReference type="InterPro" id="IPR031157">
    <property type="entry name" value="G_TR_CS"/>
</dbReference>
<dbReference type="InterPro" id="IPR054696">
    <property type="entry name" value="GTP-eEF1A_C"/>
</dbReference>
<dbReference type="InterPro" id="IPR027417">
    <property type="entry name" value="P-loop_NTPase"/>
</dbReference>
<dbReference type="InterPro" id="IPR011779">
    <property type="entry name" value="SO4_adenylTrfase_lsu"/>
</dbReference>
<dbReference type="InterPro" id="IPR000795">
    <property type="entry name" value="T_Tr_GTP-bd_dom"/>
</dbReference>
<dbReference type="InterPro" id="IPR050100">
    <property type="entry name" value="TRAFAC_GTPase_members"/>
</dbReference>
<dbReference type="InterPro" id="IPR009000">
    <property type="entry name" value="Transl_B-barrel_sf"/>
</dbReference>
<dbReference type="InterPro" id="IPR009001">
    <property type="entry name" value="Transl_elong_EF1A/Init_IF2_C"/>
</dbReference>
<dbReference type="NCBIfam" id="TIGR02034">
    <property type="entry name" value="CysN"/>
    <property type="match status" value="1"/>
</dbReference>
<dbReference type="NCBIfam" id="NF003478">
    <property type="entry name" value="PRK05124.1"/>
    <property type="match status" value="1"/>
</dbReference>
<dbReference type="PANTHER" id="PTHR23115">
    <property type="entry name" value="TRANSLATION FACTOR"/>
    <property type="match status" value="1"/>
</dbReference>
<dbReference type="Pfam" id="PF22594">
    <property type="entry name" value="GTP-eEF1A_C"/>
    <property type="match status" value="1"/>
</dbReference>
<dbReference type="Pfam" id="PF00009">
    <property type="entry name" value="GTP_EFTU"/>
    <property type="match status" value="1"/>
</dbReference>
<dbReference type="PRINTS" id="PR00315">
    <property type="entry name" value="ELONGATNFCT"/>
</dbReference>
<dbReference type="SUPFAM" id="SSF50465">
    <property type="entry name" value="EF-Tu/eEF-1alpha/eIF2-gamma C-terminal domain"/>
    <property type="match status" value="1"/>
</dbReference>
<dbReference type="SUPFAM" id="SSF52540">
    <property type="entry name" value="P-loop containing nucleoside triphosphate hydrolases"/>
    <property type="match status" value="1"/>
</dbReference>
<dbReference type="SUPFAM" id="SSF50447">
    <property type="entry name" value="Translation proteins"/>
    <property type="match status" value="1"/>
</dbReference>
<dbReference type="PROSITE" id="PS00301">
    <property type="entry name" value="G_TR_1"/>
    <property type="match status" value="1"/>
</dbReference>
<dbReference type="PROSITE" id="PS51722">
    <property type="entry name" value="G_TR_2"/>
    <property type="match status" value="1"/>
</dbReference>
<evidence type="ECO:0000250" key="1"/>
<evidence type="ECO:0000255" key="2">
    <source>
        <dbReference type="HAMAP-Rule" id="MF_00062"/>
    </source>
</evidence>
<evidence type="ECO:0000305" key="3"/>
<keyword id="KW-0067">ATP-binding</keyword>
<keyword id="KW-0342">GTP-binding</keyword>
<keyword id="KW-0547">Nucleotide-binding</keyword>
<keyword id="KW-0548">Nucleotidyltransferase</keyword>
<keyword id="KW-1185">Reference proteome</keyword>
<keyword id="KW-0808">Transferase</keyword>
<accession>P56893</accession>
<proteinExistence type="inferred from homology"/>
<reference key="1">
    <citation type="journal article" date="1999" name="J. Bacteriol.">
        <title>Reduction of adenosine-5'-phosphosulfate instead of 3'-phosphoadenosine-5'-phosphosulfate in cysteine biosynthesis by Rhizobium meliloti and other members of the family Rhizobiaceae.</title>
        <authorList>
            <person name="Abola A.P."/>
            <person name="Willits M.G."/>
            <person name="Wang R.C."/>
            <person name="Long S.R."/>
        </authorList>
    </citation>
    <scope>NUCLEOTIDE SEQUENCE [GENOMIC DNA]</scope>
    <source>
        <strain>1021</strain>
    </source>
</reference>
<reference key="2">
    <citation type="journal article" date="2001" name="Proc. Natl. Acad. Sci. U.S.A.">
        <title>Analysis of the chromosome sequence of the legume symbiont Sinorhizobium meliloti strain 1021.</title>
        <authorList>
            <person name="Capela D."/>
            <person name="Barloy-Hubler F."/>
            <person name="Gouzy J."/>
            <person name="Bothe G."/>
            <person name="Ampe F."/>
            <person name="Batut J."/>
            <person name="Boistard P."/>
            <person name="Becker A."/>
            <person name="Boutry M."/>
            <person name="Cadieu E."/>
            <person name="Dreano S."/>
            <person name="Gloux S."/>
            <person name="Godrie T."/>
            <person name="Goffeau A."/>
            <person name="Kahn D."/>
            <person name="Kiss E."/>
            <person name="Lelaure V."/>
            <person name="Masuy D."/>
            <person name="Pohl T."/>
            <person name="Portetelle D."/>
            <person name="Puehler A."/>
            <person name="Purnelle B."/>
            <person name="Ramsperger U."/>
            <person name="Renard C."/>
            <person name="Thebault P."/>
            <person name="Vandenbol M."/>
            <person name="Weidner S."/>
            <person name="Galibert F."/>
        </authorList>
    </citation>
    <scope>NUCLEOTIDE SEQUENCE [LARGE SCALE GENOMIC DNA]</scope>
    <source>
        <strain>1021</strain>
    </source>
</reference>
<reference key="3">
    <citation type="journal article" date="2001" name="Science">
        <title>The composite genome of the legume symbiont Sinorhizobium meliloti.</title>
        <authorList>
            <person name="Galibert F."/>
            <person name="Finan T.M."/>
            <person name="Long S.R."/>
            <person name="Puehler A."/>
            <person name="Abola P."/>
            <person name="Ampe F."/>
            <person name="Barloy-Hubler F."/>
            <person name="Barnett M.J."/>
            <person name="Becker A."/>
            <person name="Boistard P."/>
            <person name="Bothe G."/>
            <person name="Boutry M."/>
            <person name="Bowser L."/>
            <person name="Buhrmester J."/>
            <person name="Cadieu E."/>
            <person name="Capela D."/>
            <person name="Chain P."/>
            <person name="Cowie A."/>
            <person name="Davis R.W."/>
            <person name="Dreano S."/>
            <person name="Federspiel N.A."/>
            <person name="Fisher R.F."/>
            <person name="Gloux S."/>
            <person name="Godrie T."/>
            <person name="Goffeau A."/>
            <person name="Golding B."/>
            <person name="Gouzy J."/>
            <person name="Gurjal M."/>
            <person name="Hernandez-Lucas I."/>
            <person name="Hong A."/>
            <person name="Huizar L."/>
            <person name="Hyman R.W."/>
            <person name="Jones T."/>
            <person name="Kahn D."/>
            <person name="Kahn M.L."/>
            <person name="Kalman S."/>
            <person name="Keating D.H."/>
            <person name="Kiss E."/>
            <person name="Komp C."/>
            <person name="Lelaure V."/>
            <person name="Masuy D."/>
            <person name="Palm C."/>
            <person name="Peck M.C."/>
            <person name="Pohl T.M."/>
            <person name="Portetelle D."/>
            <person name="Purnelle B."/>
            <person name="Ramsperger U."/>
            <person name="Surzycki R."/>
            <person name="Thebault P."/>
            <person name="Vandenbol M."/>
            <person name="Vorhoelter F.J."/>
            <person name="Weidner S."/>
            <person name="Wells D.H."/>
            <person name="Wong K."/>
            <person name="Yeh K.-C."/>
            <person name="Batut J."/>
        </authorList>
    </citation>
    <scope>NUCLEOTIDE SEQUENCE [LARGE SCALE GENOMIC DNA]</scope>
    <source>
        <strain>1021</strain>
    </source>
</reference>